<accession>P18805</accession>
<name>VIF_HV1ND</name>
<organism>
    <name type="scientific">Human immunodeficiency virus type 1 group M subtype D (isolate NDK)</name>
    <name type="common">HIV-1</name>
    <dbReference type="NCBI Taxonomy" id="11695"/>
    <lineage>
        <taxon>Viruses</taxon>
        <taxon>Riboviria</taxon>
        <taxon>Pararnavirae</taxon>
        <taxon>Artverviricota</taxon>
        <taxon>Revtraviricetes</taxon>
        <taxon>Ortervirales</taxon>
        <taxon>Retroviridae</taxon>
        <taxon>Orthoretrovirinae</taxon>
        <taxon>Lentivirus</taxon>
        <taxon>Human immunodeficiency virus type 1</taxon>
    </lineage>
</organism>
<organismHost>
    <name type="scientific">Homo sapiens</name>
    <name type="common">Human</name>
    <dbReference type="NCBI Taxonomy" id="9606"/>
</organismHost>
<protein>
    <recommendedName>
        <fullName evidence="2">Virion infectivity factor</fullName>
        <shortName evidence="2">Vif</shortName>
    </recommendedName>
    <alternativeName>
        <fullName evidence="2">SOR protein</fullName>
    </alternativeName>
    <component>
        <recommendedName>
            <fullName evidence="2">p17</fullName>
        </recommendedName>
    </component>
    <component>
        <recommendedName>
            <fullName evidence="2">p7</fullName>
        </recommendedName>
    </component>
</protein>
<dbReference type="EMBL" id="M27323">
    <property type="protein sequence ID" value="AAA44870.1"/>
    <property type="molecule type" value="Genomic_DNA"/>
</dbReference>
<dbReference type="PIR" id="JQ0069">
    <property type="entry name" value="ASLJND"/>
</dbReference>
<dbReference type="SMR" id="P18805"/>
<dbReference type="Proteomes" id="UP000172620">
    <property type="component" value="Segment"/>
</dbReference>
<dbReference type="GO" id="GO:0030430">
    <property type="term" value="C:host cell cytoplasm"/>
    <property type="evidence" value="ECO:0007669"/>
    <property type="project" value="UniProtKB-SubCell"/>
</dbReference>
<dbReference type="GO" id="GO:0020002">
    <property type="term" value="C:host cell plasma membrane"/>
    <property type="evidence" value="ECO:0007669"/>
    <property type="project" value="UniProtKB-SubCell"/>
</dbReference>
<dbReference type="GO" id="GO:0016020">
    <property type="term" value="C:membrane"/>
    <property type="evidence" value="ECO:0007669"/>
    <property type="project" value="UniProtKB-UniRule"/>
</dbReference>
<dbReference type="GO" id="GO:0044423">
    <property type="term" value="C:virion component"/>
    <property type="evidence" value="ECO:0007669"/>
    <property type="project" value="UniProtKB-UniRule"/>
</dbReference>
<dbReference type="GO" id="GO:0046872">
    <property type="term" value="F:metal ion binding"/>
    <property type="evidence" value="ECO:0007669"/>
    <property type="project" value="UniProtKB-KW"/>
</dbReference>
<dbReference type="GO" id="GO:0003723">
    <property type="term" value="F:RNA binding"/>
    <property type="evidence" value="ECO:0007669"/>
    <property type="project" value="UniProtKB-UniRule"/>
</dbReference>
<dbReference type="GO" id="GO:0019058">
    <property type="term" value="P:viral life cycle"/>
    <property type="evidence" value="ECO:0007669"/>
    <property type="project" value="InterPro"/>
</dbReference>
<dbReference type="HAMAP" id="MF_04081">
    <property type="entry name" value="HIV_VIF"/>
    <property type="match status" value="1"/>
</dbReference>
<dbReference type="InterPro" id="IPR000475">
    <property type="entry name" value="Vif"/>
</dbReference>
<dbReference type="Pfam" id="PF00559">
    <property type="entry name" value="Vif"/>
    <property type="match status" value="1"/>
</dbReference>
<dbReference type="PRINTS" id="PR00349">
    <property type="entry name" value="VIRIONINFFCT"/>
</dbReference>
<evidence type="ECO:0000250" key="1">
    <source>
        <dbReference type="UniProtKB" id="O70897"/>
    </source>
</evidence>
<evidence type="ECO:0000255" key="2">
    <source>
        <dbReference type="HAMAP-Rule" id="MF_04081"/>
    </source>
</evidence>
<evidence type="ECO:0000256" key="3">
    <source>
        <dbReference type="SAM" id="MobiDB-lite"/>
    </source>
</evidence>
<keyword id="KW-0014">AIDS</keyword>
<keyword id="KW-1032">Host cell membrane</keyword>
<keyword id="KW-1035">Host cytoplasm</keyword>
<keyword id="KW-1043">Host membrane</keyword>
<keyword id="KW-0945">Host-virus interaction</keyword>
<keyword id="KW-0472">Membrane</keyword>
<keyword id="KW-0479">Metal-binding</keyword>
<keyword id="KW-0597">Phosphoprotein</keyword>
<keyword id="KW-0694">RNA-binding</keyword>
<keyword id="KW-0832">Ubl conjugation</keyword>
<keyword id="KW-0833">Ubl conjugation pathway</keyword>
<keyword id="KW-0946">Virion</keyword>
<keyword id="KW-0862">Zinc</keyword>
<sequence length="192" mass="22556">MENRWQVMIVWQVDRMRINTWKSLVKYHMYVSKKANRWFYRHHYDSHHPKISSEVHIPLGEARLVVTTYWGLHTGEKEWHLGQGVSIEWRKRRYSTQVDPGLADQLIHMYYFDCFAESAIRKAILGHIVSPSCEYQAGHNKVGSLQYLALAALIAPKKIKPPLPSVRKLTEDRWNKPQKTKGRRGSHTMNGH</sequence>
<feature type="chain" id="PRO_0000043050" description="Virion infectivity factor" evidence="2">
    <location>
        <begin position="1"/>
        <end position="192"/>
    </location>
</feature>
<feature type="chain" id="PRO_0000043051" description="p17" evidence="2">
    <location>
        <begin position="1"/>
        <end position="150"/>
    </location>
</feature>
<feature type="chain" id="PRO_0000043052" description="p7" evidence="2">
    <location>
        <begin position="151"/>
        <end position="192"/>
    </location>
</feature>
<feature type="region of interest" description="Interaction with host APOBEC3F; F1-box" evidence="2">
    <location>
        <begin position="14"/>
        <end position="17"/>
    </location>
</feature>
<feature type="region of interest" description="Interaction with host APOBEC3G; G-box" evidence="2">
    <location>
        <begin position="40"/>
        <end position="44"/>
    </location>
</feature>
<feature type="region of interest" description="Interaction with host APOBEC3F and APOBEC3G; FG-box" evidence="2">
    <location>
        <begin position="54"/>
        <end position="72"/>
    </location>
</feature>
<feature type="region of interest" description="Interaction with host APOBEC3F; F2-box" evidence="2">
    <location>
        <begin position="74"/>
        <end position="79"/>
    </location>
</feature>
<feature type="region of interest" description="RNA-binding" evidence="2">
    <location>
        <begin position="75"/>
        <end position="114"/>
    </location>
</feature>
<feature type="region of interest" description="SOCS box-like" evidence="2">
    <location>
        <begin position="151"/>
        <end position="180"/>
    </location>
</feature>
<feature type="region of interest" description="Multimerization" evidence="2">
    <location>
        <begin position="151"/>
        <end position="164"/>
    </location>
</feature>
<feature type="region of interest" description="Disordered" evidence="3">
    <location>
        <begin position="165"/>
        <end position="192"/>
    </location>
</feature>
<feature type="region of interest" description="Membrane association" evidence="2">
    <location>
        <begin position="171"/>
        <end position="172"/>
    </location>
</feature>
<feature type="short sequence motif" description="HCCH motif" evidence="2">
    <location>
        <begin position="108"/>
        <end position="139"/>
    </location>
</feature>
<feature type="short sequence motif" description="BC-box-like motif" evidence="2">
    <location>
        <begin position="144"/>
        <end position="153"/>
    </location>
</feature>
<feature type="compositionally biased region" description="Basic residues" evidence="3">
    <location>
        <begin position="176"/>
        <end position="186"/>
    </location>
</feature>
<feature type="binding site" evidence="2">
    <location>
        <position position="108"/>
    </location>
    <ligand>
        <name>Zn(2+)</name>
        <dbReference type="ChEBI" id="CHEBI:29105"/>
    </ligand>
</feature>
<feature type="binding site" evidence="2">
    <location>
        <position position="114"/>
    </location>
    <ligand>
        <name>Zn(2+)</name>
        <dbReference type="ChEBI" id="CHEBI:29105"/>
    </ligand>
</feature>
<feature type="binding site" evidence="2">
    <location>
        <position position="133"/>
    </location>
    <ligand>
        <name>Zn(2+)</name>
        <dbReference type="ChEBI" id="CHEBI:29105"/>
    </ligand>
</feature>
<feature type="binding site" evidence="2">
    <location>
        <position position="139"/>
    </location>
    <ligand>
        <name>Zn(2+)</name>
        <dbReference type="ChEBI" id="CHEBI:29105"/>
    </ligand>
</feature>
<feature type="site" description="Cleavage in virion (by viral protease)" evidence="2">
    <location>
        <begin position="150"/>
        <end position="151"/>
    </location>
</feature>
<feature type="modified residue" description="Phosphothreonine; by host MAP4K1" evidence="2">
    <location>
        <position position="96"/>
    </location>
</feature>
<feature type="modified residue" description="Phosphoserine; by host" evidence="2">
    <location>
        <position position="144"/>
    </location>
</feature>
<feature type="modified residue" description="Phosphoserine; by host MAP4K1" evidence="2">
    <location>
        <position position="165"/>
    </location>
</feature>
<feature type="modified residue" description="Phosphothreonine; by host" evidence="2">
    <location>
        <position position="188"/>
    </location>
</feature>
<gene>
    <name evidence="2" type="primary">vif</name>
</gene>
<comment type="function">
    <text evidence="2">Counteracts the innate antiviral activity of host APOBEC3F and APOBEC3G by promoting their ubiquitination and degradation. Acts as a substrate recognition component of an E3 ubiquitin-protein ligase complex: mechanistically, Vif hijacks a host cullin-5-RING E3 ubiquitin-protein ligase complex (ECS complex) and the transcription coactivator CBFB/CBF-beta to form an active E3 ubiquitin-protein ligase complex that targets APOBEC3G and APOBEC3F for polyubiquitination, leading to their degradation by the proteasome. Vif interaction with APOBEC3G also blocks its cytidine deaminase activity in a proteasome-independent manner, suggesting a dual inhibitory mechanism. May interact directly with APOBEC3G mRNA in order to inhibit its translation. Association with CBFB/CBF-beta also inhibits the transcription coactivator activity of CBFB/CBF-beta. Seems to play a role in viral morphology by affecting the stability of the viral nucleoprotein core. Finally, Vif also contributes to the G2 cell cycle arrest observed in HIV infected cells.</text>
</comment>
<comment type="subunit">
    <text evidence="1">Homomultimer; in vitro and presumably in vivo. Interacts with viral RNA and Pr55Gag precursor; these interactions mediate Vif incorporation into the virion. Interacts with the viral reverse transcriptase. Forms cullin-5-RING E3 ubiquitin-protein ligase complex (ECS complex) by interacting with host CUL5, RBX2, elongin BC complex (ELOB and ELOC) and CBFB/CBF-beta. Within the ECS complex, Vif interacts directly with host CUL5, ELOC and APOBEC (APOBEC3F and APOBEC3G) substrates. The ECS complex also contains some single-stranded RNA (ssRNA) that acts as a glue that bridges Vif with APOBEC (APOBEC3F and APOBEC3G) substrates. Interacts with host UBCE7IP1 isoform 3/ZIN and possibly with SAT. Interacts with host tyrosine kinases HCK and FYN; these interactions may decrease level of phosphorylated APOBEC3G incorporation into virions. Interacts with host ABCE1; this interaction may play a role in protecting viral RNA from damage during viral assembly. Interacts with host MDM2; this interaction targets Vif for degradation by the proteasome.</text>
</comment>
<comment type="subcellular location">
    <subcellularLocation>
        <location evidence="2">Host cytoplasm</location>
    </subcellularLocation>
    <subcellularLocation>
        <location evidence="2">Host cell membrane</location>
        <topology evidence="2">Peripheral membrane protein</topology>
        <orientation evidence="2">Cytoplasmic side</orientation>
    </subcellularLocation>
    <subcellularLocation>
        <location evidence="2">Virion</location>
    </subcellularLocation>
    <text evidence="2">In the cytoplasm, seems to colocalize with intermediate filament vimentin. A fraction is associated with the cytoplasmic side of cellular membranes, presumably via the interaction with Pr55Gag precursor. Incorporated in virions at a ratio of approximately 7 to 20 molecules per virion.</text>
</comment>
<comment type="induction">
    <text evidence="2">Expressed late during infection in a Rev-dependent manner.</text>
</comment>
<comment type="domain">
    <text evidence="2">The BC-like-box motif mediates the interaction with elongin BC complex.</text>
</comment>
<comment type="domain">
    <text evidence="2">The HCCH motif (H-x(5)-C-x(18)-C-x(5)-H) mediates the interaction with CUL5.</text>
</comment>
<comment type="PTM">
    <text evidence="2">Processed in virion by the viral protease.</text>
</comment>
<comment type="PTM">
    <text evidence="2">Highly phosphorylated on serine and threonine residues.</text>
</comment>
<comment type="PTM">
    <text evidence="2">Polyubiquitinated and degraded by the proteasome in the presence of APOBEC3G.</text>
</comment>
<comment type="miscellaneous">
    <text evidence="2">Vif-defective viruses show catastrophic failure in reverse transcription due to APOBEC-induced mutations that initiate a DNA base repair pathway and compromise the structural integrity of the ssDNA. In the absence of Vif, the virion is morphologically abnormal.</text>
</comment>
<comment type="miscellaneous">
    <text evidence="2">HIV-1 lineages are divided in three main groups, M (for Major), O (for Outlier), and N (for New, or Non-M, Non-O). The vast majority of strains found worldwide belong to the group M. Group O seems to be endemic to and largely confined to Cameroon and neighboring countries in West Central Africa, where these viruses represent a small minority of HIV-1 strains. The group N is represented by a limited number of isolates from Cameroonian persons. The group M is further subdivided in 9 clades or subtypes (A to D, F to H, J and K).</text>
</comment>
<comment type="miscellaneous">
    <text evidence="2">Required for replication in 'nonpermissive' cells, including primary T-cells, macrophages and certain T-cell lines, but is dispensable for replication in 'permissive' cell lines, such as 293T cells. In nonpermissive cells, Vif-defective viruses can produce virions, but they fail to complete reverse transcription and cannot successfully infect new cells.</text>
</comment>
<comment type="similarity">
    <text evidence="2">Belongs to the primate lentivirus group Vif protein family.</text>
</comment>
<proteinExistence type="evidence at protein level"/>
<reference key="1">
    <citation type="journal article" date="1989" name="Gene">
        <title>Nucleotide sequence of HIV1-NDK: a highly cytopathic strain of the human immunodeficiency virus.</title>
        <authorList>
            <person name="Spire B."/>
            <person name="Sire J."/>
            <person name="Zachar V."/>
            <person name="Rey F."/>
            <person name="Barre-Sinoussi F."/>
            <person name="Galibert F."/>
            <person name="Hampe A."/>
            <person name="Chermann J.C."/>
        </authorList>
    </citation>
    <scope>NUCLEOTIDE SEQUENCE [GENOMIC DNA]</scope>
</reference>
<reference key="2">
    <citation type="journal article" date="1997" name="J. Virol.">
        <title>Phenotypically Vif- human immunodeficiency virus type 1 is produced by chronically infected restrictive cells.</title>
        <authorList>
            <person name="Bouyac M."/>
            <person name="Rey F."/>
            <person name="Nascimbeni M."/>
            <person name="Courcoul M."/>
            <person name="Sire J."/>
            <person name="Blanc D."/>
            <person name="Clavel F."/>
            <person name="Vigne R."/>
            <person name="Spire B."/>
        </authorList>
    </citation>
    <scope>FUNCTION</scope>
</reference>
<reference key="3">
    <citation type="journal article" date="1997" name="J. Virol.">
        <title>Human immunodeficiency virus type 1 Vif protein binds to the Pr55Gag precursor.</title>
        <authorList>
            <person name="Bouyac M."/>
            <person name="Courcoul M."/>
            <person name="Bertoia G."/>
            <person name="Baudat Y."/>
            <person name="Gabuzda D."/>
            <person name="Blanc D."/>
            <person name="Chazal N."/>
            <person name="Boulanger P."/>
            <person name="Sire J."/>
            <person name="Vigne R."/>
            <person name="Spire B."/>
        </authorList>
    </citation>
    <scope>INTERACTION WITH PR55GAG</scope>
</reference>
<reference key="4">
    <citation type="journal article" date="2004" name="Trends Mol. Med.">
        <title>The viral infectivity factor (Vif) of HIV-1 unveiled.</title>
        <authorList>
            <person name="Rose K.M."/>
            <person name="Marin M."/>
            <person name="Kozak S.L."/>
            <person name="Kabat D."/>
        </authorList>
    </citation>
    <scope>REVIEW</scope>
</reference>